<gene>
    <name evidence="1" type="primary">rpsS</name>
    <name type="ordered locus">RD1_1406</name>
</gene>
<organism>
    <name type="scientific">Roseobacter denitrificans (strain ATCC 33942 / OCh 114)</name>
    <name type="common">Erythrobacter sp. (strain OCh 114)</name>
    <name type="synonym">Roseobacter denitrificans</name>
    <dbReference type="NCBI Taxonomy" id="375451"/>
    <lineage>
        <taxon>Bacteria</taxon>
        <taxon>Pseudomonadati</taxon>
        <taxon>Pseudomonadota</taxon>
        <taxon>Alphaproteobacteria</taxon>
        <taxon>Rhodobacterales</taxon>
        <taxon>Roseobacteraceae</taxon>
        <taxon>Roseobacter</taxon>
    </lineage>
</organism>
<name>RS19_ROSDO</name>
<sequence>MSRSVWKGPFVDSYVLKKAEASRESGRNEVIKIWSRRSTILPQFVGLTFGVYNGRKHIPVNITEDMIGQKFGEYSPTRTYYGHAADKKAKRK</sequence>
<keyword id="KW-1185">Reference proteome</keyword>
<keyword id="KW-0687">Ribonucleoprotein</keyword>
<keyword id="KW-0689">Ribosomal protein</keyword>
<keyword id="KW-0694">RNA-binding</keyword>
<keyword id="KW-0699">rRNA-binding</keyword>
<comment type="function">
    <text evidence="1">Protein S19 forms a complex with S13 that binds strongly to the 16S ribosomal RNA.</text>
</comment>
<comment type="similarity">
    <text evidence="1">Belongs to the universal ribosomal protein uS19 family.</text>
</comment>
<reference key="1">
    <citation type="journal article" date="2007" name="J. Bacteriol.">
        <title>The complete genome sequence of Roseobacter denitrificans reveals a mixotrophic rather than photosynthetic metabolism.</title>
        <authorList>
            <person name="Swingley W.D."/>
            <person name="Sadekar S."/>
            <person name="Mastrian S.D."/>
            <person name="Matthies H.J."/>
            <person name="Hao J."/>
            <person name="Ramos H."/>
            <person name="Acharya C.R."/>
            <person name="Conrad A.L."/>
            <person name="Taylor H.L."/>
            <person name="Dejesa L.C."/>
            <person name="Shah M.K."/>
            <person name="O'Huallachain M.E."/>
            <person name="Lince M.T."/>
            <person name="Blankenship R.E."/>
            <person name="Beatty J.T."/>
            <person name="Touchman J.W."/>
        </authorList>
    </citation>
    <scope>NUCLEOTIDE SEQUENCE [LARGE SCALE GENOMIC DNA]</scope>
    <source>
        <strain>ATCC 33942 / OCh 114</strain>
    </source>
</reference>
<evidence type="ECO:0000255" key="1">
    <source>
        <dbReference type="HAMAP-Rule" id="MF_00531"/>
    </source>
</evidence>
<evidence type="ECO:0000305" key="2"/>
<feature type="chain" id="PRO_0000265421" description="Small ribosomal subunit protein uS19">
    <location>
        <begin position="1"/>
        <end position="92"/>
    </location>
</feature>
<dbReference type="EMBL" id="CP000362">
    <property type="protein sequence ID" value="ABG31046.1"/>
    <property type="molecule type" value="Genomic_DNA"/>
</dbReference>
<dbReference type="RefSeq" id="WP_011567666.1">
    <property type="nucleotide sequence ID" value="NC_008209.1"/>
</dbReference>
<dbReference type="SMR" id="Q16AE7"/>
<dbReference type="STRING" id="375451.RD1_1406"/>
<dbReference type="KEGG" id="rde:RD1_1406"/>
<dbReference type="eggNOG" id="COG0185">
    <property type="taxonomic scope" value="Bacteria"/>
</dbReference>
<dbReference type="HOGENOM" id="CLU_144911_0_1_5"/>
<dbReference type="OrthoDB" id="9797833at2"/>
<dbReference type="Proteomes" id="UP000007029">
    <property type="component" value="Chromosome"/>
</dbReference>
<dbReference type="GO" id="GO:0005737">
    <property type="term" value="C:cytoplasm"/>
    <property type="evidence" value="ECO:0007669"/>
    <property type="project" value="UniProtKB-ARBA"/>
</dbReference>
<dbReference type="GO" id="GO:0015935">
    <property type="term" value="C:small ribosomal subunit"/>
    <property type="evidence" value="ECO:0007669"/>
    <property type="project" value="InterPro"/>
</dbReference>
<dbReference type="GO" id="GO:0019843">
    <property type="term" value="F:rRNA binding"/>
    <property type="evidence" value="ECO:0007669"/>
    <property type="project" value="UniProtKB-UniRule"/>
</dbReference>
<dbReference type="GO" id="GO:0003735">
    <property type="term" value="F:structural constituent of ribosome"/>
    <property type="evidence" value="ECO:0007669"/>
    <property type="project" value="InterPro"/>
</dbReference>
<dbReference type="GO" id="GO:0000028">
    <property type="term" value="P:ribosomal small subunit assembly"/>
    <property type="evidence" value="ECO:0007669"/>
    <property type="project" value="TreeGrafter"/>
</dbReference>
<dbReference type="GO" id="GO:0006412">
    <property type="term" value="P:translation"/>
    <property type="evidence" value="ECO:0007669"/>
    <property type="project" value="UniProtKB-UniRule"/>
</dbReference>
<dbReference type="FunFam" id="3.30.860.10:FF:000001">
    <property type="entry name" value="30S ribosomal protein S19"/>
    <property type="match status" value="1"/>
</dbReference>
<dbReference type="Gene3D" id="3.30.860.10">
    <property type="entry name" value="30s Ribosomal Protein S19, Chain A"/>
    <property type="match status" value="1"/>
</dbReference>
<dbReference type="HAMAP" id="MF_00531">
    <property type="entry name" value="Ribosomal_uS19"/>
    <property type="match status" value="1"/>
</dbReference>
<dbReference type="InterPro" id="IPR002222">
    <property type="entry name" value="Ribosomal_uS19"/>
</dbReference>
<dbReference type="InterPro" id="IPR005732">
    <property type="entry name" value="Ribosomal_uS19_bac-type"/>
</dbReference>
<dbReference type="InterPro" id="IPR020934">
    <property type="entry name" value="Ribosomal_uS19_CS"/>
</dbReference>
<dbReference type="InterPro" id="IPR023575">
    <property type="entry name" value="Ribosomal_uS19_SF"/>
</dbReference>
<dbReference type="NCBIfam" id="TIGR01050">
    <property type="entry name" value="rpsS_bact"/>
    <property type="match status" value="1"/>
</dbReference>
<dbReference type="PANTHER" id="PTHR11880">
    <property type="entry name" value="RIBOSOMAL PROTEIN S19P FAMILY MEMBER"/>
    <property type="match status" value="1"/>
</dbReference>
<dbReference type="PANTHER" id="PTHR11880:SF8">
    <property type="entry name" value="SMALL RIBOSOMAL SUBUNIT PROTEIN US19M"/>
    <property type="match status" value="1"/>
</dbReference>
<dbReference type="Pfam" id="PF00203">
    <property type="entry name" value="Ribosomal_S19"/>
    <property type="match status" value="1"/>
</dbReference>
<dbReference type="PIRSF" id="PIRSF002144">
    <property type="entry name" value="Ribosomal_S19"/>
    <property type="match status" value="1"/>
</dbReference>
<dbReference type="PRINTS" id="PR00975">
    <property type="entry name" value="RIBOSOMALS19"/>
</dbReference>
<dbReference type="SUPFAM" id="SSF54570">
    <property type="entry name" value="Ribosomal protein S19"/>
    <property type="match status" value="1"/>
</dbReference>
<dbReference type="PROSITE" id="PS00323">
    <property type="entry name" value="RIBOSOMAL_S19"/>
    <property type="match status" value="1"/>
</dbReference>
<accession>Q16AE7</accession>
<protein>
    <recommendedName>
        <fullName evidence="1">Small ribosomal subunit protein uS19</fullName>
    </recommendedName>
    <alternativeName>
        <fullName evidence="2">30S ribosomal protein S19</fullName>
    </alternativeName>
</protein>
<proteinExistence type="inferred from homology"/>